<name>ASR_ECOSE</name>
<keyword id="KW-0574">Periplasm</keyword>
<keyword id="KW-0732">Signal</keyword>
<dbReference type="EMBL" id="AP009240">
    <property type="protein sequence ID" value="BAG77242.1"/>
    <property type="molecule type" value="Genomic_DNA"/>
</dbReference>
<dbReference type="KEGG" id="ecy:ECSE_1718"/>
<dbReference type="HOGENOM" id="CLU_102486_2_0_6"/>
<dbReference type="Proteomes" id="UP000008199">
    <property type="component" value="Chromosome"/>
</dbReference>
<dbReference type="GO" id="GO:0042597">
    <property type="term" value="C:periplasmic space"/>
    <property type="evidence" value="ECO:0007669"/>
    <property type="project" value="UniProtKB-SubCell"/>
</dbReference>
<dbReference type="HAMAP" id="MF_00546">
    <property type="entry name" value="Asr"/>
    <property type="match status" value="1"/>
</dbReference>
<dbReference type="InterPro" id="IPR023497">
    <property type="entry name" value="Acid_shock"/>
</dbReference>
<dbReference type="NCBIfam" id="NF033636">
    <property type="entry name" value="acid_shock_Asr"/>
    <property type="match status" value="1"/>
</dbReference>
<dbReference type="Pfam" id="PF06392">
    <property type="entry name" value="Asr"/>
    <property type="match status" value="1"/>
</dbReference>
<evidence type="ECO:0000255" key="1">
    <source>
        <dbReference type="HAMAP-Rule" id="MF_00546"/>
    </source>
</evidence>
<evidence type="ECO:0000256" key="2">
    <source>
        <dbReference type="SAM" id="MobiDB-lite"/>
    </source>
</evidence>
<proteinExistence type="inferred from homology"/>
<organism>
    <name type="scientific">Escherichia coli (strain SE11)</name>
    <dbReference type="NCBI Taxonomy" id="409438"/>
    <lineage>
        <taxon>Bacteria</taxon>
        <taxon>Pseudomonadati</taxon>
        <taxon>Pseudomonadota</taxon>
        <taxon>Gammaproteobacteria</taxon>
        <taxon>Enterobacterales</taxon>
        <taxon>Enterobacteriaceae</taxon>
        <taxon>Escherichia</taxon>
    </lineage>
</organism>
<comment type="function">
    <text evidence="1">Required for growth and/or survival at acidic conditions.</text>
</comment>
<comment type="subcellular location">
    <subcellularLocation>
        <location evidence="1">Periplasm</location>
    </subcellularLocation>
</comment>
<comment type="PTM">
    <text evidence="1">Proteolytic processing gives rise to the active protein.</text>
</comment>
<comment type="similarity">
    <text evidence="1">Belongs to the Asr family.</text>
</comment>
<gene>
    <name evidence="1" type="primary">asr</name>
    <name type="ordered locus">ECSE_1718</name>
</gene>
<feature type="signal peptide" evidence="1">
    <location>
        <begin position="1"/>
        <end position="21"/>
    </location>
</feature>
<feature type="propeptide" id="PRO_1000128931" evidence="1">
    <location>
        <begin position="22"/>
        <end position="58"/>
    </location>
</feature>
<feature type="chain" id="PRO_1000128932" description="Acid shock protein">
    <location>
        <begin position="59"/>
        <end position="102"/>
    </location>
</feature>
<feature type="region of interest" description="Disordered" evidence="2">
    <location>
        <begin position="22"/>
        <end position="102"/>
    </location>
</feature>
<feature type="compositionally biased region" description="Low complexity" evidence="2">
    <location>
        <begin position="22"/>
        <end position="41"/>
    </location>
</feature>
<feature type="compositionally biased region" description="Basic residues" evidence="2">
    <location>
        <begin position="80"/>
        <end position="90"/>
    </location>
</feature>
<feature type="compositionally biased region" description="Low complexity" evidence="2">
    <location>
        <begin position="91"/>
        <end position="102"/>
    </location>
</feature>
<protein>
    <recommendedName>
        <fullName evidence="1">Acid shock protein</fullName>
    </recommendedName>
</protein>
<reference key="1">
    <citation type="journal article" date="2008" name="DNA Res.">
        <title>Complete genome sequence and comparative analysis of the wild-type commensal Escherichia coli strain SE11 isolated from a healthy adult.</title>
        <authorList>
            <person name="Oshima K."/>
            <person name="Toh H."/>
            <person name="Ogura Y."/>
            <person name="Sasamoto H."/>
            <person name="Morita H."/>
            <person name="Park S.-H."/>
            <person name="Ooka T."/>
            <person name="Iyoda S."/>
            <person name="Taylor T.D."/>
            <person name="Hayashi T."/>
            <person name="Itoh K."/>
            <person name="Hattori M."/>
        </authorList>
    </citation>
    <scope>NUCLEOTIDE SEQUENCE [LARGE SCALE GENOMIC DNA]</scope>
    <source>
        <strain>SE11</strain>
    </source>
</reference>
<accession>B6IB31</accession>
<sequence length="102" mass="10476">MKKVLGLVVAAAMGLSSAAFAAETATTPAPTATTTKAAPAKTTHHKKQHKAAPAQKAQAAKKHHKNTKAEQKAPEQKAQAAKKHAGKHSHQQPAKPAAQPAA</sequence>